<protein>
    <recommendedName>
        <fullName>Protein NrdI</fullName>
    </recommendedName>
</protein>
<keyword id="KW-0002">3D-structure</keyword>
<keyword id="KW-1185">Reference proteome</keyword>
<proteinExistence type="evidence at protein level"/>
<name>NRDI_ECOLI</name>
<accession>P0A772</accession>
<accession>P77025</accession>
<accession>Q47415</accession>
<sequence>MSQLVYFSSSSENTQRFIERLGLPAVRIPLNERERIQVDEPYILIVPSYGGGGTAGAVPRQVIRFLNDEHNRALLRGVIASGNRNFGEAYGRAGDVIARKCGVPWLYRFELMGTQSDIENVRKGVTEFWQRQPQNA</sequence>
<dbReference type="EMBL" id="X79787">
    <property type="protein sequence ID" value="CAA56185.1"/>
    <property type="molecule type" value="Genomic_DNA"/>
</dbReference>
<dbReference type="EMBL" id="U00096">
    <property type="protein sequence ID" value="AAC75721.1"/>
    <property type="molecule type" value="Genomic_DNA"/>
</dbReference>
<dbReference type="EMBL" id="AP009048">
    <property type="protein sequence ID" value="BAA16538.2"/>
    <property type="molecule type" value="Genomic_DNA"/>
</dbReference>
<dbReference type="PIR" id="S70890">
    <property type="entry name" value="S70890"/>
</dbReference>
<dbReference type="RefSeq" id="NP_417160.1">
    <property type="nucleotide sequence ID" value="NC_000913.3"/>
</dbReference>
<dbReference type="RefSeq" id="WP_000080947.1">
    <property type="nucleotide sequence ID" value="NZ_STEB01000042.1"/>
</dbReference>
<dbReference type="PDB" id="3N39">
    <property type="method" value="X-ray"/>
    <property type="resolution" value="2.50 A"/>
    <property type="chains" value="C/D=1-133"/>
</dbReference>
<dbReference type="PDB" id="3N3A">
    <property type="method" value="X-ray"/>
    <property type="resolution" value="1.99 A"/>
    <property type="chains" value="C/D=1-133"/>
</dbReference>
<dbReference type="PDB" id="3N3B">
    <property type="method" value="X-ray"/>
    <property type="resolution" value="2.36 A"/>
    <property type="chains" value="C/D=1-133"/>
</dbReference>
<dbReference type="PDBsum" id="3N39"/>
<dbReference type="PDBsum" id="3N3A"/>
<dbReference type="PDBsum" id="3N3B"/>
<dbReference type="SMR" id="P0A772"/>
<dbReference type="BioGRID" id="4262268">
    <property type="interactions" value="38"/>
</dbReference>
<dbReference type="FunCoup" id="P0A772">
    <property type="interactions" value="199"/>
</dbReference>
<dbReference type="IntAct" id="P0A772">
    <property type="interactions" value="27"/>
</dbReference>
<dbReference type="STRING" id="511145.b2674"/>
<dbReference type="PaxDb" id="511145-b2674"/>
<dbReference type="EnsemblBacteria" id="AAC75721">
    <property type="protein sequence ID" value="AAC75721"/>
    <property type="gene ID" value="b2674"/>
</dbReference>
<dbReference type="GeneID" id="75172757"/>
<dbReference type="GeneID" id="947158"/>
<dbReference type="KEGG" id="ecj:JW2649"/>
<dbReference type="KEGG" id="eco:b2674"/>
<dbReference type="KEGG" id="ecoc:C3026_14735"/>
<dbReference type="PATRIC" id="fig|1411691.4.peg.4067"/>
<dbReference type="EchoBASE" id="EB3072"/>
<dbReference type="eggNOG" id="COG1780">
    <property type="taxonomic scope" value="Bacteria"/>
</dbReference>
<dbReference type="HOGENOM" id="CLU_114845_0_0_6"/>
<dbReference type="InParanoid" id="P0A772"/>
<dbReference type="OMA" id="NTHRFVG"/>
<dbReference type="OrthoDB" id="350535at2"/>
<dbReference type="PhylomeDB" id="P0A772"/>
<dbReference type="BioCyc" id="EcoCyc:G7402-MONOMER"/>
<dbReference type="EvolutionaryTrace" id="P0A772"/>
<dbReference type="PRO" id="PR:P0A772"/>
<dbReference type="Proteomes" id="UP000000625">
    <property type="component" value="Chromosome"/>
</dbReference>
<dbReference type="GO" id="GO:0010181">
    <property type="term" value="F:FMN binding"/>
    <property type="evidence" value="ECO:0000314"/>
    <property type="project" value="EcoCyc"/>
</dbReference>
<dbReference type="GO" id="GO:0036211">
    <property type="term" value="P:protein modification process"/>
    <property type="evidence" value="ECO:0007669"/>
    <property type="project" value="InterPro"/>
</dbReference>
<dbReference type="FunFam" id="3.40.50.360:FF:000005">
    <property type="entry name" value="Protein NrdI"/>
    <property type="match status" value="1"/>
</dbReference>
<dbReference type="Gene3D" id="3.40.50.360">
    <property type="match status" value="1"/>
</dbReference>
<dbReference type="HAMAP" id="MF_00128">
    <property type="entry name" value="NrdI"/>
    <property type="match status" value="1"/>
</dbReference>
<dbReference type="InterPro" id="IPR029039">
    <property type="entry name" value="Flavoprotein-like_sf"/>
</dbReference>
<dbReference type="InterPro" id="IPR020852">
    <property type="entry name" value="RNR_Ib_NrdI_bac"/>
</dbReference>
<dbReference type="InterPro" id="IPR004465">
    <property type="entry name" value="RNR_NrdI"/>
</dbReference>
<dbReference type="NCBIfam" id="TIGR00333">
    <property type="entry name" value="nrdI"/>
    <property type="match status" value="1"/>
</dbReference>
<dbReference type="PANTHER" id="PTHR37297">
    <property type="entry name" value="PROTEIN NRDI"/>
    <property type="match status" value="1"/>
</dbReference>
<dbReference type="PANTHER" id="PTHR37297:SF1">
    <property type="entry name" value="PROTEIN NRDI"/>
    <property type="match status" value="1"/>
</dbReference>
<dbReference type="Pfam" id="PF07972">
    <property type="entry name" value="Flavodoxin_NdrI"/>
    <property type="match status" value="1"/>
</dbReference>
<dbReference type="PIRSF" id="PIRSF005087">
    <property type="entry name" value="NrdI"/>
    <property type="match status" value="1"/>
</dbReference>
<dbReference type="SUPFAM" id="SSF52218">
    <property type="entry name" value="Flavoproteins"/>
    <property type="match status" value="1"/>
</dbReference>
<organism>
    <name type="scientific">Escherichia coli (strain K12)</name>
    <dbReference type="NCBI Taxonomy" id="83333"/>
    <lineage>
        <taxon>Bacteria</taxon>
        <taxon>Pseudomonadati</taxon>
        <taxon>Pseudomonadota</taxon>
        <taxon>Gammaproteobacteria</taxon>
        <taxon>Enterobacterales</taxon>
        <taxon>Enterobacteriaceae</taxon>
        <taxon>Escherichia</taxon>
    </lineage>
</organism>
<evidence type="ECO:0000250" key="1"/>
<evidence type="ECO:0000269" key="2">
    <source>
    </source>
</evidence>
<evidence type="ECO:0000305" key="3"/>
<evidence type="ECO:0007829" key="4">
    <source>
        <dbReference type="PDB" id="3N39"/>
    </source>
</evidence>
<evidence type="ECO:0007829" key="5">
    <source>
        <dbReference type="PDB" id="3N3A"/>
    </source>
</evidence>
<evidence type="ECO:0007829" key="6">
    <source>
        <dbReference type="PDB" id="3N3B"/>
    </source>
</evidence>
<gene>
    <name type="primary">nrdI</name>
    <name type="synonym">ygaO</name>
    <name type="ordered locus">b2674</name>
    <name type="ordered locus">JW2649</name>
</gene>
<reference key="1">
    <citation type="journal article" date="1996" name="Mol. Microbiol.">
        <title>Promoter identification and expression analysis of Salmonella typhimurium and Escherichia coli nrdEF operons encoding one of two class I ribonucleotide reductases present in both bacteria.</title>
        <authorList>
            <person name="Jordan A."/>
            <person name="Aragall E."/>
            <person name="Gibert I."/>
            <person name="Barbe J."/>
        </authorList>
    </citation>
    <scope>NUCLEOTIDE SEQUENCE [GENOMIC DNA]</scope>
    <source>
        <strain>K12</strain>
    </source>
</reference>
<reference key="2">
    <citation type="journal article" date="1997" name="DNA Res.">
        <title>Construction of a contiguous 874-kb sequence of the Escherichia coli-K12 genome corresponding to 50.0-68.8 min on the linkage map and analysis of its sequence features.</title>
        <authorList>
            <person name="Yamamoto Y."/>
            <person name="Aiba H."/>
            <person name="Baba T."/>
            <person name="Hayashi K."/>
            <person name="Inada T."/>
            <person name="Isono K."/>
            <person name="Itoh T."/>
            <person name="Kimura S."/>
            <person name="Kitagawa M."/>
            <person name="Makino K."/>
            <person name="Miki T."/>
            <person name="Mitsuhashi N."/>
            <person name="Mizobuchi K."/>
            <person name="Mori H."/>
            <person name="Nakade S."/>
            <person name="Nakamura Y."/>
            <person name="Nashimoto H."/>
            <person name="Oshima T."/>
            <person name="Oyama S."/>
            <person name="Saito N."/>
            <person name="Sampei G."/>
            <person name="Satoh Y."/>
            <person name="Sivasundaram S."/>
            <person name="Tagami H."/>
            <person name="Takahashi H."/>
            <person name="Takeda J."/>
            <person name="Takemoto K."/>
            <person name="Uehara K."/>
            <person name="Wada C."/>
            <person name="Yamagata S."/>
            <person name="Horiuchi T."/>
        </authorList>
    </citation>
    <scope>NUCLEOTIDE SEQUENCE [LARGE SCALE GENOMIC DNA]</scope>
    <source>
        <strain>K12 / W3110 / ATCC 27325 / DSM 5911</strain>
    </source>
</reference>
<reference key="3">
    <citation type="journal article" date="1997" name="Science">
        <title>The complete genome sequence of Escherichia coli K-12.</title>
        <authorList>
            <person name="Blattner F.R."/>
            <person name="Plunkett G. III"/>
            <person name="Bloch C.A."/>
            <person name="Perna N.T."/>
            <person name="Burland V."/>
            <person name="Riley M."/>
            <person name="Collado-Vides J."/>
            <person name="Glasner J.D."/>
            <person name="Rode C.K."/>
            <person name="Mayhew G.F."/>
            <person name="Gregor J."/>
            <person name="Davis N.W."/>
            <person name="Kirkpatrick H.A."/>
            <person name="Goeden M.A."/>
            <person name="Rose D.J."/>
            <person name="Mau B."/>
            <person name="Shao Y."/>
        </authorList>
    </citation>
    <scope>NUCLEOTIDE SEQUENCE [LARGE SCALE GENOMIC DNA]</scope>
    <source>
        <strain>K12 / MG1655 / ATCC 47076</strain>
    </source>
</reference>
<reference key="4">
    <citation type="journal article" date="2006" name="Mol. Syst. Biol.">
        <title>Highly accurate genome sequences of Escherichia coli K-12 strains MG1655 and W3110.</title>
        <authorList>
            <person name="Hayashi K."/>
            <person name="Morooka N."/>
            <person name="Yamamoto Y."/>
            <person name="Fujita K."/>
            <person name="Isono K."/>
            <person name="Choi S."/>
            <person name="Ohtsubo E."/>
            <person name="Baba T."/>
            <person name="Wanner B.L."/>
            <person name="Mori H."/>
            <person name="Horiuchi T."/>
        </authorList>
    </citation>
    <scope>NUCLEOTIDE SEQUENCE [LARGE SCALE GENOMIC DNA]</scope>
    <source>
        <strain>K12 / W3110 / ATCC 27325 / DSM 5911</strain>
    </source>
</reference>
<reference key="5">
    <citation type="journal article" date="2009" name="Mol. Cell">
        <title>Hydroxyurea induces hydroxyl radical-mediated cell death in Escherichia coli.</title>
        <authorList>
            <person name="Davies B.W."/>
            <person name="Kohanski M.A."/>
            <person name="Simmons L.A."/>
            <person name="Winkler J.A."/>
            <person name="Collins J.J."/>
            <person name="Walker G.C."/>
        </authorList>
    </citation>
    <scope>INDUCTION BY HYDROXYUREA</scope>
    <source>
        <strain>K12 / MC4100 / ATCC 35695 / DSM 6574</strain>
    </source>
</reference>
<comment type="function">
    <text evidence="1">Probably involved in ribonucleotide reductase function.</text>
</comment>
<comment type="induction">
    <text evidence="2">Induced 2-fold by hydroxyurea.</text>
</comment>
<comment type="similarity">
    <text evidence="3">Belongs to the NrdI family.</text>
</comment>
<feature type="chain" id="PRO_0000164314" description="Protein NrdI">
    <location>
        <begin position="1"/>
        <end position="136"/>
    </location>
</feature>
<feature type="strand" evidence="5">
    <location>
        <begin position="4"/>
        <end position="6"/>
    </location>
</feature>
<feature type="helix" evidence="5">
    <location>
        <begin position="13"/>
        <end position="21"/>
    </location>
</feature>
<feature type="strand" evidence="6">
    <location>
        <begin position="25"/>
        <end position="27"/>
    </location>
</feature>
<feature type="strand" evidence="4">
    <location>
        <begin position="30"/>
        <end position="33"/>
    </location>
</feature>
<feature type="strand" evidence="5">
    <location>
        <begin position="42"/>
        <end position="47"/>
    </location>
</feature>
<feature type="strand" evidence="5">
    <location>
        <begin position="52"/>
        <end position="58"/>
    </location>
</feature>
<feature type="helix" evidence="5">
    <location>
        <begin position="60"/>
        <end position="66"/>
    </location>
</feature>
<feature type="helix" evidence="5">
    <location>
        <begin position="69"/>
        <end position="74"/>
    </location>
</feature>
<feature type="strand" evidence="5">
    <location>
        <begin position="75"/>
        <end position="82"/>
    </location>
</feature>
<feature type="helix" evidence="5">
    <location>
        <begin position="84"/>
        <end position="89"/>
    </location>
</feature>
<feature type="helix" evidence="5">
    <location>
        <begin position="92"/>
        <end position="101"/>
    </location>
</feature>
<feature type="strand" evidence="5">
    <location>
        <begin position="105"/>
        <end position="110"/>
    </location>
</feature>
<feature type="helix" evidence="5">
    <location>
        <begin position="115"/>
        <end position="130"/>
    </location>
</feature>